<organism>
    <name type="scientific">Cyanidium caldarium</name>
    <name type="common">Red alga</name>
    <dbReference type="NCBI Taxonomy" id="2771"/>
    <lineage>
        <taxon>Eukaryota</taxon>
        <taxon>Rhodophyta</taxon>
        <taxon>Bangiophyceae</taxon>
        <taxon>Cyanidiales</taxon>
        <taxon>Cyanidiaceae</taxon>
        <taxon>Cyanidium</taxon>
    </lineage>
</organism>
<accession>Q9TLV8</accession>
<sequence>MARAKFERSKPHINIGTIGHVDHGKTTLTAAISAVLASIDNTVKLKKFDEIDAAPEEKARGITINTSHVEYQTPLRHYAHVDCPGHADYVKNMITGAAQMDGAILVVSAADGPMPQTREHILLAKQVGVPSIVVFLNKADMIDDEELLELVELEVRELLSKYDFPGEEVPFVAGSALLALEACLKNPTIGKGKDKWVDKIFELMDMVDKYFPTPERDIDKTFLMAVEDVFSITGRGTVATGRIERGAIKVGETVEIVGLKSTASTTVTGLEMFQKTLDEGLAGDNVGVLLRGVQKQDIERGMVLAKPGSITPHDKFEAEVYVLNKEEGGRHTPFFPGYRPQFYVRTTDVTGNISQFTTDDGGSAEMVLPGDRIKMTVELIHPVAIEQGMRFAIREGGRTVGAGIVSKILD</sequence>
<comment type="function">
    <text evidence="2">GTP hydrolase that promotes the GTP-dependent binding of aminoacyl-tRNA to the A-site of ribosomes during protein biosynthesis.</text>
</comment>
<comment type="catalytic activity">
    <reaction evidence="2">
        <text>GTP + H2O = GDP + phosphate + H(+)</text>
        <dbReference type="Rhea" id="RHEA:19669"/>
        <dbReference type="ChEBI" id="CHEBI:15377"/>
        <dbReference type="ChEBI" id="CHEBI:15378"/>
        <dbReference type="ChEBI" id="CHEBI:37565"/>
        <dbReference type="ChEBI" id="CHEBI:43474"/>
        <dbReference type="ChEBI" id="CHEBI:58189"/>
        <dbReference type="EC" id="3.6.5.3"/>
    </reaction>
    <physiologicalReaction direction="left-to-right" evidence="2">
        <dbReference type="Rhea" id="RHEA:19670"/>
    </physiologicalReaction>
</comment>
<comment type="subcellular location">
    <subcellularLocation>
        <location>Plastid</location>
        <location>Chloroplast</location>
    </subcellularLocation>
</comment>
<comment type="similarity">
    <text evidence="3">Belongs to the TRAFAC class translation factor GTPase superfamily. Classic translation factor GTPase family. EF-Tu/EF-1A subfamily.</text>
</comment>
<protein>
    <recommendedName>
        <fullName>Elongation factor Tu, chloroplastic</fullName>
        <shortName>EF-Tu</shortName>
        <ecNumber evidence="2">3.6.5.3</ecNumber>
    </recommendedName>
</protein>
<reference key="1">
    <citation type="journal article" date="2000" name="J. Mol. Evol.">
        <title>The structure and gene repertoire of an ancient red algal plastid genome.</title>
        <authorList>
            <person name="Gloeckner G."/>
            <person name="Rosenthal A."/>
            <person name="Valentin K.-U."/>
        </authorList>
    </citation>
    <scope>NUCLEOTIDE SEQUENCE [LARGE SCALE GENOMIC DNA]</scope>
    <source>
        <strain>RK-1</strain>
    </source>
</reference>
<dbReference type="EC" id="3.6.5.3" evidence="2"/>
<dbReference type="EMBL" id="AF022186">
    <property type="protein sequence ID" value="AAF12934.1"/>
    <property type="molecule type" value="Genomic_DNA"/>
</dbReference>
<dbReference type="RefSeq" id="NP_045160.1">
    <property type="nucleotide sequence ID" value="NC_001840.1"/>
</dbReference>
<dbReference type="SMR" id="Q9TLV8"/>
<dbReference type="GeneID" id="800172"/>
<dbReference type="GO" id="GO:0009507">
    <property type="term" value="C:chloroplast"/>
    <property type="evidence" value="ECO:0007669"/>
    <property type="project" value="UniProtKB-SubCell"/>
</dbReference>
<dbReference type="GO" id="GO:0005829">
    <property type="term" value="C:cytosol"/>
    <property type="evidence" value="ECO:0007669"/>
    <property type="project" value="TreeGrafter"/>
</dbReference>
<dbReference type="GO" id="GO:0005525">
    <property type="term" value="F:GTP binding"/>
    <property type="evidence" value="ECO:0007669"/>
    <property type="project" value="UniProtKB-UniRule"/>
</dbReference>
<dbReference type="GO" id="GO:0003924">
    <property type="term" value="F:GTPase activity"/>
    <property type="evidence" value="ECO:0007669"/>
    <property type="project" value="InterPro"/>
</dbReference>
<dbReference type="GO" id="GO:0003746">
    <property type="term" value="F:translation elongation factor activity"/>
    <property type="evidence" value="ECO:0007669"/>
    <property type="project" value="UniProtKB-UniRule"/>
</dbReference>
<dbReference type="CDD" id="cd01884">
    <property type="entry name" value="EF_Tu"/>
    <property type="match status" value="1"/>
</dbReference>
<dbReference type="CDD" id="cd03697">
    <property type="entry name" value="EFTU_II"/>
    <property type="match status" value="1"/>
</dbReference>
<dbReference type="CDD" id="cd03707">
    <property type="entry name" value="EFTU_III"/>
    <property type="match status" value="1"/>
</dbReference>
<dbReference type="FunFam" id="2.40.30.10:FF:000001">
    <property type="entry name" value="Elongation factor Tu"/>
    <property type="match status" value="1"/>
</dbReference>
<dbReference type="FunFam" id="2.40.30.10:FF:000046">
    <property type="entry name" value="Elongation factor Tu"/>
    <property type="match status" value="1"/>
</dbReference>
<dbReference type="FunFam" id="3.40.50.300:FF:000003">
    <property type="entry name" value="Elongation factor Tu"/>
    <property type="match status" value="1"/>
</dbReference>
<dbReference type="Gene3D" id="3.40.50.300">
    <property type="entry name" value="P-loop containing nucleotide triphosphate hydrolases"/>
    <property type="match status" value="1"/>
</dbReference>
<dbReference type="Gene3D" id="2.40.30.10">
    <property type="entry name" value="Translation factors"/>
    <property type="match status" value="2"/>
</dbReference>
<dbReference type="HAMAP" id="MF_00118_B">
    <property type="entry name" value="EF_Tu_B"/>
    <property type="match status" value="1"/>
</dbReference>
<dbReference type="InterPro" id="IPR041709">
    <property type="entry name" value="EF-Tu_GTP-bd"/>
</dbReference>
<dbReference type="InterPro" id="IPR050055">
    <property type="entry name" value="EF-Tu_GTPase"/>
</dbReference>
<dbReference type="InterPro" id="IPR004161">
    <property type="entry name" value="EFTu-like_2"/>
</dbReference>
<dbReference type="InterPro" id="IPR033720">
    <property type="entry name" value="EFTU_2"/>
</dbReference>
<dbReference type="InterPro" id="IPR031157">
    <property type="entry name" value="G_TR_CS"/>
</dbReference>
<dbReference type="InterPro" id="IPR027417">
    <property type="entry name" value="P-loop_NTPase"/>
</dbReference>
<dbReference type="InterPro" id="IPR005225">
    <property type="entry name" value="Small_GTP-bd"/>
</dbReference>
<dbReference type="InterPro" id="IPR000795">
    <property type="entry name" value="T_Tr_GTP-bd_dom"/>
</dbReference>
<dbReference type="InterPro" id="IPR009000">
    <property type="entry name" value="Transl_B-barrel_sf"/>
</dbReference>
<dbReference type="InterPro" id="IPR009001">
    <property type="entry name" value="Transl_elong_EF1A/Init_IF2_C"/>
</dbReference>
<dbReference type="InterPro" id="IPR004541">
    <property type="entry name" value="Transl_elong_EFTu/EF1A_bac/org"/>
</dbReference>
<dbReference type="InterPro" id="IPR004160">
    <property type="entry name" value="Transl_elong_EFTu/EF1A_C"/>
</dbReference>
<dbReference type="NCBIfam" id="TIGR00485">
    <property type="entry name" value="EF-Tu"/>
    <property type="match status" value="1"/>
</dbReference>
<dbReference type="NCBIfam" id="NF000766">
    <property type="entry name" value="PRK00049.1"/>
    <property type="match status" value="1"/>
</dbReference>
<dbReference type="NCBIfam" id="NF009372">
    <property type="entry name" value="PRK12735.1"/>
    <property type="match status" value="1"/>
</dbReference>
<dbReference type="NCBIfam" id="NF009373">
    <property type="entry name" value="PRK12736.1"/>
    <property type="match status" value="1"/>
</dbReference>
<dbReference type="NCBIfam" id="TIGR00231">
    <property type="entry name" value="small_GTP"/>
    <property type="match status" value="1"/>
</dbReference>
<dbReference type="PANTHER" id="PTHR43721:SF22">
    <property type="entry name" value="ELONGATION FACTOR TU, MITOCHONDRIAL"/>
    <property type="match status" value="1"/>
</dbReference>
<dbReference type="PANTHER" id="PTHR43721">
    <property type="entry name" value="ELONGATION FACTOR TU-RELATED"/>
    <property type="match status" value="1"/>
</dbReference>
<dbReference type="Pfam" id="PF00009">
    <property type="entry name" value="GTP_EFTU"/>
    <property type="match status" value="1"/>
</dbReference>
<dbReference type="Pfam" id="PF03144">
    <property type="entry name" value="GTP_EFTU_D2"/>
    <property type="match status" value="1"/>
</dbReference>
<dbReference type="Pfam" id="PF03143">
    <property type="entry name" value="GTP_EFTU_D3"/>
    <property type="match status" value="1"/>
</dbReference>
<dbReference type="PRINTS" id="PR00315">
    <property type="entry name" value="ELONGATNFCT"/>
</dbReference>
<dbReference type="SUPFAM" id="SSF50465">
    <property type="entry name" value="EF-Tu/eEF-1alpha/eIF2-gamma C-terminal domain"/>
    <property type="match status" value="1"/>
</dbReference>
<dbReference type="SUPFAM" id="SSF52540">
    <property type="entry name" value="P-loop containing nucleoside triphosphate hydrolases"/>
    <property type="match status" value="1"/>
</dbReference>
<dbReference type="SUPFAM" id="SSF50447">
    <property type="entry name" value="Translation proteins"/>
    <property type="match status" value="1"/>
</dbReference>
<dbReference type="PROSITE" id="PS00301">
    <property type="entry name" value="G_TR_1"/>
    <property type="match status" value="1"/>
</dbReference>
<dbReference type="PROSITE" id="PS51722">
    <property type="entry name" value="G_TR_2"/>
    <property type="match status" value="1"/>
</dbReference>
<name>EFTU_CYACA</name>
<gene>
    <name type="primary">tufA</name>
</gene>
<evidence type="ECO:0000250" key="1"/>
<evidence type="ECO:0000255" key="2">
    <source>
        <dbReference type="HAMAP-Rule" id="MF_00118"/>
    </source>
</evidence>
<evidence type="ECO:0000305" key="3"/>
<feature type="chain" id="PRO_0000091453" description="Elongation factor Tu, chloroplastic">
    <location>
        <begin position="1"/>
        <end position="410"/>
    </location>
</feature>
<feature type="domain" description="tr-type G">
    <location>
        <begin position="10"/>
        <end position="215"/>
    </location>
</feature>
<feature type="region of interest" description="G1" evidence="1">
    <location>
        <begin position="19"/>
        <end position="26"/>
    </location>
</feature>
<feature type="region of interest" description="G2" evidence="1">
    <location>
        <begin position="61"/>
        <end position="65"/>
    </location>
</feature>
<feature type="region of interest" description="G3" evidence="1">
    <location>
        <begin position="82"/>
        <end position="85"/>
    </location>
</feature>
<feature type="region of interest" description="G4" evidence="1">
    <location>
        <begin position="137"/>
        <end position="140"/>
    </location>
</feature>
<feature type="region of interest" description="G5" evidence="1">
    <location>
        <begin position="175"/>
        <end position="177"/>
    </location>
</feature>
<feature type="binding site" evidence="1">
    <location>
        <begin position="19"/>
        <end position="26"/>
    </location>
    <ligand>
        <name>GTP</name>
        <dbReference type="ChEBI" id="CHEBI:37565"/>
    </ligand>
</feature>
<feature type="binding site" evidence="2">
    <location>
        <position position="26"/>
    </location>
    <ligand>
        <name>Mg(2+)</name>
        <dbReference type="ChEBI" id="CHEBI:18420"/>
    </ligand>
</feature>
<feature type="binding site" evidence="1">
    <location>
        <begin position="82"/>
        <end position="86"/>
    </location>
    <ligand>
        <name>GTP</name>
        <dbReference type="ChEBI" id="CHEBI:37565"/>
    </ligand>
</feature>
<feature type="binding site" evidence="1">
    <location>
        <begin position="137"/>
        <end position="140"/>
    </location>
    <ligand>
        <name>GTP</name>
        <dbReference type="ChEBI" id="CHEBI:37565"/>
    </ligand>
</feature>
<proteinExistence type="inferred from homology"/>
<keyword id="KW-0150">Chloroplast</keyword>
<keyword id="KW-0251">Elongation factor</keyword>
<keyword id="KW-0342">GTP-binding</keyword>
<keyword id="KW-0378">Hydrolase</keyword>
<keyword id="KW-0460">Magnesium</keyword>
<keyword id="KW-0479">Metal-binding</keyword>
<keyword id="KW-0547">Nucleotide-binding</keyword>
<keyword id="KW-0934">Plastid</keyword>
<keyword id="KW-0648">Protein biosynthesis</keyword>
<geneLocation type="chloroplast"/>